<feature type="chain" id="PRO_0000159047" description="Sulfur carrier protein TusA">
    <location>
        <begin position="1"/>
        <end position="80"/>
    </location>
</feature>
<feature type="active site" description="Cysteine persulfide intermediate" evidence="1">
    <location>
        <position position="17"/>
    </location>
</feature>
<protein>
    <recommendedName>
        <fullName evidence="1">Sulfur carrier protein TusA</fullName>
    </recommendedName>
</protein>
<sequence>MTDFTPDAILDATGLNCPEPVMMLHQHVRNLAAGGLLKVIATDPSTRRDIPKFCNFLGHELLQQQEDAGTFLYWIRKKAD</sequence>
<keyword id="KW-0963">Cytoplasm</keyword>
<keyword id="KW-1185">Reference proteome</keyword>
<name>TUSA_PSEPK</name>
<proteinExistence type="inferred from homology"/>
<accession>Q88L21</accession>
<comment type="function">
    <text evidence="1">Sulfur carrier protein which probably makes part of a sulfur-relay system.</text>
</comment>
<comment type="subcellular location">
    <subcellularLocation>
        <location evidence="1">Cytoplasm</location>
    </subcellularLocation>
</comment>
<comment type="similarity">
    <text evidence="1">Belongs to the sulfur carrier protein TusA family.</text>
</comment>
<gene>
    <name evidence="1" type="primary">tusA</name>
    <name type="ordered locus">PP_2116</name>
</gene>
<dbReference type="EMBL" id="AE015451">
    <property type="protein sequence ID" value="AAN67729.1"/>
    <property type="molecule type" value="Genomic_DNA"/>
</dbReference>
<dbReference type="RefSeq" id="NP_744265.1">
    <property type="nucleotide sequence ID" value="NC_002947.4"/>
</dbReference>
<dbReference type="RefSeq" id="WP_003248727.1">
    <property type="nucleotide sequence ID" value="NZ_CP169744.1"/>
</dbReference>
<dbReference type="SMR" id="Q88L21"/>
<dbReference type="STRING" id="160488.PP_2116"/>
<dbReference type="PaxDb" id="160488-PP_2116"/>
<dbReference type="GeneID" id="97167135"/>
<dbReference type="KEGG" id="ppu:PP_2116"/>
<dbReference type="PATRIC" id="fig|160488.4.peg.2232"/>
<dbReference type="eggNOG" id="COG0425">
    <property type="taxonomic scope" value="Bacteria"/>
</dbReference>
<dbReference type="HOGENOM" id="CLU_165255_5_1_6"/>
<dbReference type="OrthoDB" id="9797352at2"/>
<dbReference type="PhylomeDB" id="Q88L21"/>
<dbReference type="BioCyc" id="PPUT160488:G1G01-2256-MONOMER"/>
<dbReference type="Proteomes" id="UP000000556">
    <property type="component" value="Chromosome"/>
</dbReference>
<dbReference type="GO" id="GO:0005737">
    <property type="term" value="C:cytoplasm"/>
    <property type="evidence" value="ECO:0007669"/>
    <property type="project" value="UniProtKB-SubCell"/>
</dbReference>
<dbReference type="GO" id="GO:0097163">
    <property type="term" value="F:sulfur carrier activity"/>
    <property type="evidence" value="ECO:0007669"/>
    <property type="project" value="UniProtKB-UniRule"/>
</dbReference>
<dbReference type="GO" id="GO:0002143">
    <property type="term" value="P:tRNA wobble position uridine thiolation"/>
    <property type="evidence" value="ECO:0007669"/>
    <property type="project" value="InterPro"/>
</dbReference>
<dbReference type="CDD" id="cd03423">
    <property type="entry name" value="SirA"/>
    <property type="match status" value="1"/>
</dbReference>
<dbReference type="Gene3D" id="3.30.110.40">
    <property type="entry name" value="TusA-like domain"/>
    <property type="match status" value="1"/>
</dbReference>
<dbReference type="HAMAP" id="MF_00413">
    <property type="entry name" value="Thiourid_synth_A"/>
    <property type="match status" value="1"/>
</dbReference>
<dbReference type="InterPro" id="IPR022931">
    <property type="entry name" value="Sulphur_carrier_TusA"/>
</dbReference>
<dbReference type="InterPro" id="IPR001455">
    <property type="entry name" value="TusA-like"/>
</dbReference>
<dbReference type="InterPro" id="IPR036868">
    <property type="entry name" value="TusA-like_sf"/>
</dbReference>
<dbReference type="NCBIfam" id="NF001423">
    <property type="entry name" value="PRK00299.1"/>
    <property type="match status" value="1"/>
</dbReference>
<dbReference type="PANTHER" id="PTHR33279:SF2">
    <property type="entry name" value="SULFUR CARRIER PROTEIN TUSA"/>
    <property type="match status" value="1"/>
</dbReference>
<dbReference type="PANTHER" id="PTHR33279">
    <property type="entry name" value="SULFUR CARRIER PROTEIN YEDF-RELATED"/>
    <property type="match status" value="1"/>
</dbReference>
<dbReference type="Pfam" id="PF01206">
    <property type="entry name" value="TusA"/>
    <property type="match status" value="1"/>
</dbReference>
<dbReference type="SUPFAM" id="SSF64307">
    <property type="entry name" value="SirA-like"/>
    <property type="match status" value="1"/>
</dbReference>
<dbReference type="PROSITE" id="PS01148">
    <property type="entry name" value="UPF0033"/>
    <property type="match status" value="1"/>
</dbReference>
<evidence type="ECO:0000255" key="1">
    <source>
        <dbReference type="HAMAP-Rule" id="MF_00413"/>
    </source>
</evidence>
<organism>
    <name type="scientific">Pseudomonas putida (strain ATCC 47054 / DSM 6125 / CFBP 8728 / NCIMB 11950 / KT2440)</name>
    <dbReference type="NCBI Taxonomy" id="160488"/>
    <lineage>
        <taxon>Bacteria</taxon>
        <taxon>Pseudomonadati</taxon>
        <taxon>Pseudomonadota</taxon>
        <taxon>Gammaproteobacteria</taxon>
        <taxon>Pseudomonadales</taxon>
        <taxon>Pseudomonadaceae</taxon>
        <taxon>Pseudomonas</taxon>
    </lineage>
</organism>
<reference key="1">
    <citation type="journal article" date="2002" name="Environ. Microbiol.">
        <title>Complete genome sequence and comparative analysis of the metabolically versatile Pseudomonas putida KT2440.</title>
        <authorList>
            <person name="Nelson K.E."/>
            <person name="Weinel C."/>
            <person name="Paulsen I.T."/>
            <person name="Dodson R.J."/>
            <person name="Hilbert H."/>
            <person name="Martins dos Santos V.A.P."/>
            <person name="Fouts D.E."/>
            <person name="Gill S.R."/>
            <person name="Pop M."/>
            <person name="Holmes M."/>
            <person name="Brinkac L.M."/>
            <person name="Beanan M.J."/>
            <person name="DeBoy R.T."/>
            <person name="Daugherty S.C."/>
            <person name="Kolonay J.F."/>
            <person name="Madupu R."/>
            <person name="Nelson W.C."/>
            <person name="White O."/>
            <person name="Peterson J.D."/>
            <person name="Khouri H.M."/>
            <person name="Hance I."/>
            <person name="Chris Lee P."/>
            <person name="Holtzapple E.K."/>
            <person name="Scanlan D."/>
            <person name="Tran K."/>
            <person name="Moazzez A."/>
            <person name="Utterback T.R."/>
            <person name="Rizzo M."/>
            <person name="Lee K."/>
            <person name="Kosack D."/>
            <person name="Moestl D."/>
            <person name="Wedler H."/>
            <person name="Lauber J."/>
            <person name="Stjepandic D."/>
            <person name="Hoheisel J."/>
            <person name="Straetz M."/>
            <person name="Heim S."/>
            <person name="Kiewitz C."/>
            <person name="Eisen J.A."/>
            <person name="Timmis K.N."/>
            <person name="Duesterhoeft A."/>
            <person name="Tuemmler B."/>
            <person name="Fraser C.M."/>
        </authorList>
    </citation>
    <scope>NUCLEOTIDE SEQUENCE [LARGE SCALE GENOMIC DNA]</scope>
    <source>
        <strain>ATCC 47054 / DSM 6125 / CFBP 8728 / NCIMB 11950 / KT2440</strain>
    </source>
</reference>